<name>SYP_CERS1</name>
<sequence>MRLSRYFLPVLKENPSEAQIVSHRYMLRAGMIKQQAAGIYSWLPLGFKVLKRIEQIVHEEQIRAGHIPLLMPTLQPADLWRESGRYDDYGEEMLRITDRHKRDMLYGPTNEEMITDIFRSHVSSYKDLPLTLYHIQWKFRDEIRPRFGVMRGREFLMKDGYNFDLDYESAIHAYNRHMVSYLRTYERMGLQAIPMRAASGPIGGDNTHEFLVLASTGESEVFYDAAITDLKFGDRVVNYDDRAECEAIVKEWTAPYARTDETHDEAVFGQIPEERRRSSRGIEVGQIFYFGTKYSEPMGATVVTADGSRVPVHMGSHGIGVSRLLGAIIEASHDDKGIIWPEGVTPFHAGIVNLKQGDSSTDLACEALYRDLSARGLEPLYDDRDERAGAKFATMDLIGLPWRITVGPRGISAGKVELTNRRTGESEEMSSGAAVDRLAQIYAGI</sequence>
<gene>
    <name evidence="1" type="primary">proS</name>
    <name type="ordered locus">Rsph17029_2434</name>
</gene>
<comment type="function">
    <text evidence="1">Catalyzes the attachment of proline to tRNA(Pro) in a two-step reaction: proline is first activated by ATP to form Pro-AMP and then transferred to the acceptor end of tRNA(Pro).</text>
</comment>
<comment type="catalytic activity">
    <reaction evidence="1">
        <text>tRNA(Pro) + L-proline + ATP = L-prolyl-tRNA(Pro) + AMP + diphosphate</text>
        <dbReference type="Rhea" id="RHEA:14305"/>
        <dbReference type="Rhea" id="RHEA-COMP:9700"/>
        <dbReference type="Rhea" id="RHEA-COMP:9702"/>
        <dbReference type="ChEBI" id="CHEBI:30616"/>
        <dbReference type="ChEBI" id="CHEBI:33019"/>
        <dbReference type="ChEBI" id="CHEBI:60039"/>
        <dbReference type="ChEBI" id="CHEBI:78442"/>
        <dbReference type="ChEBI" id="CHEBI:78532"/>
        <dbReference type="ChEBI" id="CHEBI:456215"/>
        <dbReference type="EC" id="6.1.1.15"/>
    </reaction>
</comment>
<comment type="subunit">
    <text evidence="1">Homodimer.</text>
</comment>
<comment type="subcellular location">
    <subcellularLocation>
        <location evidence="1">Cytoplasm</location>
    </subcellularLocation>
</comment>
<comment type="similarity">
    <text evidence="1">Belongs to the class-II aminoacyl-tRNA synthetase family. ProS type 2 subfamily.</text>
</comment>
<accession>A3PMH0</accession>
<keyword id="KW-0030">Aminoacyl-tRNA synthetase</keyword>
<keyword id="KW-0067">ATP-binding</keyword>
<keyword id="KW-0963">Cytoplasm</keyword>
<keyword id="KW-0436">Ligase</keyword>
<keyword id="KW-0547">Nucleotide-binding</keyword>
<keyword id="KW-0648">Protein biosynthesis</keyword>
<evidence type="ECO:0000255" key="1">
    <source>
        <dbReference type="HAMAP-Rule" id="MF_01570"/>
    </source>
</evidence>
<feature type="chain" id="PRO_1000069181" description="Proline--tRNA ligase">
    <location>
        <begin position="1"/>
        <end position="445"/>
    </location>
</feature>
<dbReference type="EC" id="6.1.1.15" evidence="1"/>
<dbReference type="EMBL" id="CP000577">
    <property type="protein sequence ID" value="ABN77536.1"/>
    <property type="molecule type" value="Genomic_DNA"/>
</dbReference>
<dbReference type="RefSeq" id="WP_011841663.1">
    <property type="nucleotide sequence ID" value="NC_009049.1"/>
</dbReference>
<dbReference type="SMR" id="A3PMH0"/>
<dbReference type="GeneID" id="67447530"/>
<dbReference type="KEGG" id="rsh:Rsph17029_2434"/>
<dbReference type="HOGENOM" id="CLU_016739_4_2_5"/>
<dbReference type="GO" id="GO:0005829">
    <property type="term" value="C:cytosol"/>
    <property type="evidence" value="ECO:0007669"/>
    <property type="project" value="TreeGrafter"/>
</dbReference>
<dbReference type="GO" id="GO:0005524">
    <property type="term" value="F:ATP binding"/>
    <property type="evidence" value="ECO:0007669"/>
    <property type="project" value="UniProtKB-UniRule"/>
</dbReference>
<dbReference type="GO" id="GO:0004827">
    <property type="term" value="F:proline-tRNA ligase activity"/>
    <property type="evidence" value="ECO:0007669"/>
    <property type="project" value="UniProtKB-UniRule"/>
</dbReference>
<dbReference type="GO" id="GO:0006433">
    <property type="term" value="P:prolyl-tRNA aminoacylation"/>
    <property type="evidence" value="ECO:0007669"/>
    <property type="project" value="UniProtKB-UniRule"/>
</dbReference>
<dbReference type="CDD" id="cd00861">
    <property type="entry name" value="ProRS_anticodon_short"/>
    <property type="match status" value="1"/>
</dbReference>
<dbReference type="CDD" id="cd00779">
    <property type="entry name" value="ProRS_core_prok"/>
    <property type="match status" value="1"/>
</dbReference>
<dbReference type="FunFam" id="3.30.930.10:FF:000042">
    <property type="entry name" value="probable proline--tRNA ligase, mitochondrial"/>
    <property type="match status" value="1"/>
</dbReference>
<dbReference type="FunFam" id="3.40.50.800:FF:000032">
    <property type="entry name" value="Proline--tRNA ligase"/>
    <property type="match status" value="1"/>
</dbReference>
<dbReference type="Gene3D" id="3.40.50.800">
    <property type="entry name" value="Anticodon-binding domain"/>
    <property type="match status" value="1"/>
</dbReference>
<dbReference type="Gene3D" id="3.30.930.10">
    <property type="entry name" value="Bira Bifunctional Protein, Domain 2"/>
    <property type="match status" value="1"/>
</dbReference>
<dbReference type="HAMAP" id="MF_01570">
    <property type="entry name" value="Pro_tRNA_synth_type2"/>
    <property type="match status" value="1"/>
</dbReference>
<dbReference type="InterPro" id="IPR002314">
    <property type="entry name" value="aa-tRNA-synt_IIb"/>
</dbReference>
<dbReference type="InterPro" id="IPR006195">
    <property type="entry name" value="aa-tRNA-synth_II"/>
</dbReference>
<dbReference type="InterPro" id="IPR045864">
    <property type="entry name" value="aa-tRNA-synth_II/BPL/LPL"/>
</dbReference>
<dbReference type="InterPro" id="IPR004154">
    <property type="entry name" value="Anticodon-bd"/>
</dbReference>
<dbReference type="InterPro" id="IPR036621">
    <property type="entry name" value="Anticodon-bd_dom_sf"/>
</dbReference>
<dbReference type="InterPro" id="IPR002316">
    <property type="entry name" value="Pro-tRNA-ligase_IIa"/>
</dbReference>
<dbReference type="InterPro" id="IPR050062">
    <property type="entry name" value="Pro-tRNA_synthetase"/>
</dbReference>
<dbReference type="InterPro" id="IPR023716">
    <property type="entry name" value="Prolyl-tRNA_ligase_IIa_type2"/>
</dbReference>
<dbReference type="InterPro" id="IPR044140">
    <property type="entry name" value="ProRS_anticodon_short"/>
</dbReference>
<dbReference type="InterPro" id="IPR033730">
    <property type="entry name" value="ProRS_core_prok"/>
</dbReference>
<dbReference type="NCBIfam" id="NF008979">
    <property type="entry name" value="PRK12325.1"/>
    <property type="match status" value="1"/>
</dbReference>
<dbReference type="PANTHER" id="PTHR42753">
    <property type="entry name" value="MITOCHONDRIAL RIBOSOME PROTEIN L39/PROLYL-TRNA LIGASE FAMILY MEMBER"/>
    <property type="match status" value="1"/>
</dbReference>
<dbReference type="PANTHER" id="PTHR42753:SF2">
    <property type="entry name" value="PROLINE--TRNA LIGASE"/>
    <property type="match status" value="1"/>
</dbReference>
<dbReference type="Pfam" id="PF03129">
    <property type="entry name" value="HGTP_anticodon"/>
    <property type="match status" value="1"/>
</dbReference>
<dbReference type="Pfam" id="PF00587">
    <property type="entry name" value="tRNA-synt_2b"/>
    <property type="match status" value="1"/>
</dbReference>
<dbReference type="PRINTS" id="PR01046">
    <property type="entry name" value="TRNASYNTHPRO"/>
</dbReference>
<dbReference type="SUPFAM" id="SSF52954">
    <property type="entry name" value="Class II aaRS ABD-related"/>
    <property type="match status" value="1"/>
</dbReference>
<dbReference type="SUPFAM" id="SSF55681">
    <property type="entry name" value="Class II aaRS and biotin synthetases"/>
    <property type="match status" value="1"/>
</dbReference>
<dbReference type="PROSITE" id="PS50862">
    <property type="entry name" value="AA_TRNA_LIGASE_II"/>
    <property type="match status" value="1"/>
</dbReference>
<protein>
    <recommendedName>
        <fullName evidence="1">Proline--tRNA ligase</fullName>
        <ecNumber evidence="1">6.1.1.15</ecNumber>
    </recommendedName>
    <alternativeName>
        <fullName evidence="1">Prolyl-tRNA synthetase</fullName>
        <shortName evidence="1">ProRS</shortName>
    </alternativeName>
</protein>
<reference key="1">
    <citation type="submission" date="2007-02" db="EMBL/GenBank/DDBJ databases">
        <title>Complete sequence of chromosome 1 of Rhodobacter sphaeroides ATCC 17029.</title>
        <authorList>
            <person name="Copeland A."/>
            <person name="Lucas S."/>
            <person name="Lapidus A."/>
            <person name="Barry K."/>
            <person name="Detter J.C."/>
            <person name="Glavina del Rio T."/>
            <person name="Hammon N."/>
            <person name="Israni S."/>
            <person name="Dalin E."/>
            <person name="Tice H."/>
            <person name="Pitluck S."/>
            <person name="Kiss H."/>
            <person name="Brettin T."/>
            <person name="Bruce D."/>
            <person name="Han C."/>
            <person name="Tapia R."/>
            <person name="Gilna P."/>
            <person name="Schmutz J."/>
            <person name="Larimer F."/>
            <person name="Land M."/>
            <person name="Hauser L."/>
            <person name="Kyrpides N."/>
            <person name="Mikhailova N."/>
            <person name="Richardson P."/>
            <person name="Mackenzie C."/>
            <person name="Choudhary M."/>
            <person name="Donohue T.J."/>
            <person name="Kaplan S."/>
        </authorList>
    </citation>
    <scope>NUCLEOTIDE SEQUENCE [LARGE SCALE GENOMIC DNA]</scope>
    <source>
        <strain>ATCC 17029 / ATH 2.4.9</strain>
    </source>
</reference>
<organism>
    <name type="scientific">Cereibacter sphaeroides (strain ATCC 17029 / ATH 2.4.9)</name>
    <name type="common">Rhodobacter sphaeroides</name>
    <dbReference type="NCBI Taxonomy" id="349101"/>
    <lineage>
        <taxon>Bacteria</taxon>
        <taxon>Pseudomonadati</taxon>
        <taxon>Pseudomonadota</taxon>
        <taxon>Alphaproteobacteria</taxon>
        <taxon>Rhodobacterales</taxon>
        <taxon>Paracoccaceae</taxon>
        <taxon>Cereibacter</taxon>
    </lineage>
</organism>
<proteinExistence type="inferred from homology"/>